<comment type="function">
    <text evidence="1">Catalyzes the conversion of S-adenosyl-L-methionine (SAM) to carboxy-S-adenosyl-L-methionine (Cx-SAM).</text>
</comment>
<comment type="catalytic activity">
    <reaction evidence="1">
        <text>prephenate + S-adenosyl-L-methionine = carboxy-S-adenosyl-L-methionine + 3-phenylpyruvate + H2O</text>
        <dbReference type="Rhea" id="RHEA:51692"/>
        <dbReference type="ChEBI" id="CHEBI:15377"/>
        <dbReference type="ChEBI" id="CHEBI:18005"/>
        <dbReference type="ChEBI" id="CHEBI:29934"/>
        <dbReference type="ChEBI" id="CHEBI:59789"/>
        <dbReference type="ChEBI" id="CHEBI:134278"/>
    </reaction>
</comment>
<comment type="subunit">
    <text evidence="1">Homodimer.</text>
</comment>
<comment type="similarity">
    <text evidence="1">Belongs to the class I-like SAM-binding methyltransferase superfamily. Cx-SAM synthase family.</text>
</comment>
<comment type="sequence caution" evidence="2">
    <conflict type="erroneous initiation">
        <sequence resource="EMBL-CDS" id="BAC95054"/>
    </conflict>
</comment>
<reference key="1">
    <citation type="journal article" date="2003" name="Genome Res.">
        <title>Comparative genome analysis of Vibrio vulnificus, a marine pathogen.</title>
        <authorList>
            <person name="Chen C.-Y."/>
            <person name="Wu K.-M."/>
            <person name="Chang Y.-C."/>
            <person name="Chang C.-H."/>
            <person name="Tsai H.-C."/>
            <person name="Liao T.-L."/>
            <person name="Liu Y.-M."/>
            <person name="Chen H.-J."/>
            <person name="Shen A.B.-T."/>
            <person name="Li J.-C."/>
            <person name="Su T.-L."/>
            <person name="Shao C.-P."/>
            <person name="Lee C.-T."/>
            <person name="Hor L.-I."/>
            <person name="Tsai S.-F."/>
        </authorList>
    </citation>
    <scope>NUCLEOTIDE SEQUENCE [LARGE SCALE GENOMIC DNA]</scope>
    <source>
        <strain>YJ016</strain>
    </source>
</reference>
<organism>
    <name type="scientific">Vibrio vulnificus (strain YJ016)</name>
    <dbReference type="NCBI Taxonomy" id="196600"/>
    <lineage>
        <taxon>Bacteria</taxon>
        <taxon>Pseudomonadati</taxon>
        <taxon>Pseudomonadota</taxon>
        <taxon>Gammaproteobacteria</taxon>
        <taxon>Vibrionales</taxon>
        <taxon>Vibrionaceae</taxon>
        <taxon>Vibrio</taxon>
    </lineage>
</organism>
<keyword id="KW-0949">S-adenosyl-L-methionine</keyword>
<keyword id="KW-0808">Transferase</keyword>
<proteinExistence type="inferred from homology"/>
<evidence type="ECO:0000255" key="1">
    <source>
        <dbReference type="HAMAP-Rule" id="MF_01589"/>
    </source>
</evidence>
<evidence type="ECO:0000305" key="2"/>
<protein>
    <recommendedName>
        <fullName evidence="1">Carboxy-S-adenosyl-L-methionine synthase</fullName>
        <shortName evidence="1">Cx-SAM synthase</shortName>
        <ecNumber evidence="1">2.1.3.-</ecNumber>
    </recommendedName>
</protein>
<name>CMOA_VIBVY</name>
<accession>Q7MJ72</accession>
<sequence>MNPKSNPDTIFSAPIDKIGDFTFDERVAEVFPDMIQRSVPGYSNIISAIGMLAERFVKPHSNVYDLGCSLGAATLSMRRHIKQEGCQIIAVDNSKAMVERCKLHVNAYRSDTPVNVIEADIRNIDIENASVVVLNFTLQFLSPEDRYVLLEKIYAGLRPGGILILSEKYVFEDQVSNELLIDLHHDFKRANGYSELEISQKRSAIENVMRPDSKKQHKERFAQIGFSSYDVWFQCFNFGSMFAIK</sequence>
<feature type="chain" id="PRO_0000314403" description="Carboxy-S-adenosyl-L-methionine synthase">
    <location>
        <begin position="1"/>
        <end position="245"/>
    </location>
</feature>
<feature type="binding site" evidence="1">
    <location>
        <position position="42"/>
    </location>
    <ligand>
        <name>S-adenosyl-L-methionine</name>
        <dbReference type="ChEBI" id="CHEBI:59789"/>
    </ligand>
</feature>
<feature type="binding site" evidence="1">
    <location>
        <begin position="67"/>
        <end position="69"/>
    </location>
    <ligand>
        <name>S-adenosyl-L-methionine</name>
        <dbReference type="ChEBI" id="CHEBI:59789"/>
    </ligand>
</feature>
<feature type="binding site" evidence="1">
    <location>
        <begin position="92"/>
        <end position="93"/>
    </location>
    <ligand>
        <name>S-adenosyl-L-methionine</name>
        <dbReference type="ChEBI" id="CHEBI:59789"/>
    </ligand>
</feature>
<feature type="binding site" evidence="1">
    <location>
        <begin position="120"/>
        <end position="121"/>
    </location>
    <ligand>
        <name>S-adenosyl-L-methionine</name>
        <dbReference type="ChEBI" id="CHEBI:59789"/>
    </ligand>
</feature>
<feature type="binding site" evidence="1">
    <location>
        <position position="135"/>
    </location>
    <ligand>
        <name>S-adenosyl-L-methionine</name>
        <dbReference type="ChEBI" id="CHEBI:59789"/>
    </ligand>
</feature>
<feature type="binding site" evidence="1">
    <location>
        <position position="202"/>
    </location>
    <ligand>
        <name>S-adenosyl-L-methionine</name>
        <dbReference type="ChEBI" id="CHEBI:59789"/>
    </ligand>
</feature>
<gene>
    <name evidence="1" type="primary">cmoA</name>
    <name type="ordered locus">VV2290</name>
</gene>
<dbReference type="EC" id="2.1.3.-" evidence="1"/>
<dbReference type="EMBL" id="BA000037">
    <property type="protein sequence ID" value="BAC95054.1"/>
    <property type="status" value="ALT_INIT"/>
    <property type="molecule type" value="Genomic_DNA"/>
</dbReference>
<dbReference type="RefSeq" id="WP_013571414.1">
    <property type="nucleotide sequence ID" value="NC_005139.1"/>
</dbReference>
<dbReference type="SMR" id="Q7MJ72"/>
<dbReference type="STRING" id="672.VV93_v1c20000"/>
<dbReference type="KEGG" id="vvy:VV2290"/>
<dbReference type="PATRIC" id="fig|196600.6.peg.2301"/>
<dbReference type="eggNOG" id="COG4106">
    <property type="taxonomic scope" value="Bacteria"/>
</dbReference>
<dbReference type="HOGENOM" id="CLU_078475_0_0_6"/>
<dbReference type="Proteomes" id="UP000002675">
    <property type="component" value="Chromosome I"/>
</dbReference>
<dbReference type="GO" id="GO:0016743">
    <property type="term" value="F:carboxyl- or carbamoyltransferase activity"/>
    <property type="evidence" value="ECO:0007669"/>
    <property type="project" value="UniProtKB-UniRule"/>
</dbReference>
<dbReference type="GO" id="GO:1904047">
    <property type="term" value="F:S-adenosyl-L-methionine binding"/>
    <property type="evidence" value="ECO:0007669"/>
    <property type="project" value="UniProtKB-UniRule"/>
</dbReference>
<dbReference type="GO" id="GO:0002098">
    <property type="term" value="P:tRNA wobble uridine modification"/>
    <property type="evidence" value="ECO:0007669"/>
    <property type="project" value="InterPro"/>
</dbReference>
<dbReference type="CDD" id="cd02440">
    <property type="entry name" value="AdoMet_MTases"/>
    <property type="match status" value="1"/>
</dbReference>
<dbReference type="Gene3D" id="3.40.50.150">
    <property type="entry name" value="Vaccinia Virus protein VP39"/>
    <property type="match status" value="1"/>
</dbReference>
<dbReference type="HAMAP" id="MF_01589">
    <property type="entry name" value="Cx_SAM_synthase"/>
    <property type="match status" value="1"/>
</dbReference>
<dbReference type="InterPro" id="IPR005271">
    <property type="entry name" value="CmoA"/>
</dbReference>
<dbReference type="InterPro" id="IPR041698">
    <property type="entry name" value="Methyltransf_25"/>
</dbReference>
<dbReference type="InterPro" id="IPR029063">
    <property type="entry name" value="SAM-dependent_MTases_sf"/>
</dbReference>
<dbReference type="NCBIfam" id="TIGR00740">
    <property type="entry name" value="carboxy-S-adenosyl-L-methionine synthase CmoA"/>
    <property type="match status" value="1"/>
</dbReference>
<dbReference type="NCBIfam" id="NF011995">
    <property type="entry name" value="PRK15451.1"/>
    <property type="match status" value="1"/>
</dbReference>
<dbReference type="PANTHER" id="PTHR43861:SF2">
    <property type="entry name" value="CARBOXY-S-ADENOSYL-L-METHIONINE SYNTHASE"/>
    <property type="match status" value="1"/>
</dbReference>
<dbReference type="PANTHER" id="PTHR43861">
    <property type="entry name" value="TRANS-ACONITATE 2-METHYLTRANSFERASE-RELATED"/>
    <property type="match status" value="1"/>
</dbReference>
<dbReference type="Pfam" id="PF13649">
    <property type="entry name" value="Methyltransf_25"/>
    <property type="match status" value="1"/>
</dbReference>
<dbReference type="PIRSF" id="PIRSF006325">
    <property type="entry name" value="MeTrfase_bac"/>
    <property type="match status" value="1"/>
</dbReference>
<dbReference type="SUPFAM" id="SSF53335">
    <property type="entry name" value="S-adenosyl-L-methionine-dependent methyltransferases"/>
    <property type="match status" value="1"/>
</dbReference>